<organism>
    <name type="scientific">Arabidopsis thaliana</name>
    <name type="common">Mouse-ear cress</name>
    <dbReference type="NCBI Taxonomy" id="3702"/>
    <lineage>
        <taxon>Eukaryota</taxon>
        <taxon>Viridiplantae</taxon>
        <taxon>Streptophyta</taxon>
        <taxon>Embryophyta</taxon>
        <taxon>Tracheophyta</taxon>
        <taxon>Spermatophyta</taxon>
        <taxon>Magnoliopsida</taxon>
        <taxon>eudicotyledons</taxon>
        <taxon>Gunneridae</taxon>
        <taxon>Pentapetalae</taxon>
        <taxon>rosids</taxon>
        <taxon>malvids</taxon>
        <taxon>Brassicales</taxon>
        <taxon>Brassicaceae</taxon>
        <taxon>Camelineae</taxon>
        <taxon>Arabidopsis</taxon>
    </lineage>
</organism>
<accession>Q9ZWC5</accession>
<accession>A5YYE7</accession>
<proteinExistence type="evidence at transcript level"/>
<feature type="chain" id="PRO_0000350859" description="Scarecrow-like protein 18">
    <location>
        <begin position="1"/>
        <end position="445"/>
    </location>
</feature>
<feature type="domain" description="GRAS" evidence="1">
    <location>
        <begin position="32"/>
        <end position="445"/>
    </location>
</feature>
<feature type="region of interest" description="Disordered" evidence="2">
    <location>
        <begin position="1"/>
        <end position="26"/>
    </location>
</feature>
<feature type="region of interest" description="Leucine repeat I (LRI)" evidence="1">
    <location>
        <begin position="39"/>
        <end position="127"/>
    </location>
</feature>
<feature type="region of interest" description="VHIID" evidence="1">
    <location>
        <begin position="146"/>
        <end position="217"/>
    </location>
</feature>
<feature type="region of interest" description="Leucine repeat II (LRII)" evidence="1">
    <location>
        <begin position="227"/>
        <end position="259"/>
    </location>
</feature>
<feature type="region of interest" description="PFYRE" evidence="1">
    <location>
        <begin position="275"/>
        <end position="366"/>
    </location>
</feature>
<feature type="region of interest" description="SAW" evidence="1">
    <location>
        <begin position="369"/>
        <end position="445"/>
    </location>
</feature>
<feature type="short sequence motif" description="VHIID" evidence="1">
    <location>
        <begin position="179"/>
        <end position="183"/>
    </location>
</feature>
<feature type="compositionally biased region" description="Low complexity" evidence="2">
    <location>
        <begin position="1"/>
        <end position="21"/>
    </location>
</feature>
<sequence length="445" mass="50009">MLTSFKSSSSSSEDATATTTENPPPLCIASSSAATSASHHLRRLLFTAANFVSQSNFTAAQNLLSILSLNSSPHGDSTERLVHLFTKALSVRINRQQQDQTAETVATWTTNEMTMSNSTVFTSSVCKEQFLFRTKNNNSDFESCYYLWLNQLTPFIRFGHLTANQAILDATETNDNGALHILDLDISQGLQWPPLMQALAERSSNPSSPPPSLRITGCGRDVTGLNRTGDRLTRFADSLGLQFQFHTLVIVEEDLAGLLLQIRLLALSAVQGETIAVNCVHFLHKIFNDDGDMIGHFLSAIKSLNSRIVTMAEREANHGDHSFLNRFSEAVDHYMAIFDSLEATLPPNSRERLTLEQRWFGKEILDVVAAEETERKQRHRRFEIWEEMMKRFGFVNVPIGSFALSQAKLLLRLHYPSEGYNLQFLNNSLFLGWQNRPLFSVSSWK</sequence>
<name>SCL18_ARATH</name>
<gene>
    <name type="primary">SCL18</name>
    <name type="synonym">LAS</name>
    <name type="ordered locus">At1g55580</name>
    <name type="ORF">F20N2.1</name>
</gene>
<comment type="function">
    <text evidence="3">Probable transcription factor required for axillary (lateral) shoot meristem formation during vegetative development. Seems to act upstream of REVOLUTA.</text>
</comment>
<comment type="subcellular location">
    <subcellularLocation>
        <location evidence="5">Nucleus</location>
    </subcellularLocation>
</comment>
<comment type="tissue specificity">
    <text evidence="4">Expressed in roots and flowers.</text>
</comment>
<comment type="developmental stage">
    <text evidence="3">Expressed in the axils of leaf primordia and leaves from P1 to P20/22. In the axil of P1, expressed in 3 to 5 cell layers including the L1 to L3 layers of the shoot apical meristem (SAM). Then, extends from 1 or 2 cell layers in the adaxial-abaxial dimension. From P5 to P22, expression is restricted to a 1 to 2 cell-layer domain located within primordium. In the axils of older leaf primordia, expression decreases until it is no longer detectable in the axils of primordia older than P20/P22.</text>
</comment>
<comment type="disruption phenotype">
    <text evidence="3">Plants fail to initiate axillary meristems and do not form lateral shoots during vegetative development.</text>
</comment>
<comment type="similarity">
    <text evidence="5">Belongs to the GRAS family.</text>
</comment>
<reference key="1">
    <citation type="journal article" date="2003" name="Genes Dev.">
        <title>Molecular analysis of the LATERAL SUPPRESSOR gene in Arabidopsis reveals a conserved control mechanism for axillary meristem formation.</title>
        <authorList>
            <person name="Greb T."/>
            <person name="Clarenz O."/>
            <person name="Schaefer E."/>
            <person name="Mueller D."/>
            <person name="Herrero R."/>
            <person name="Schmitz G."/>
            <person name="Theres K."/>
        </authorList>
    </citation>
    <scope>NUCLEOTIDE SEQUENCE [MRNA]</scope>
    <scope>FUNCTION</scope>
    <scope>DISRUPTION PHENOTYPE</scope>
    <scope>DEVELOPMENTAL STAGE</scope>
    <source>
        <strain>cv. Columbia</strain>
    </source>
</reference>
<reference key="2">
    <citation type="journal article" date="2000" name="Nature">
        <title>Sequence and analysis of chromosome 1 of the plant Arabidopsis thaliana.</title>
        <authorList>
            <person name="Theologis A."/>
            <person name="Ecker J.R."/>
            <person name="Palm C.J."/>
            <person name="Federspiel N.A."/>
            <person name="Kaul S."/>
            <person name="White O."/>
            <person name="Alonso J."/>
            <person name="Altafi H."/>
            <person name="Araujo R."/>
            <person name="Bowman C.L."/>
            <person name="Brooks S.Y."/>
            <person name="Buehler E."/>
            <person name="Chan A."/>
            <person name="Chao Q."/>
            <person name="Chen H."/>
            <person name="Cheuk R.F."/>
            <person name="Chin C.W."/>
            <person name="Chung M.K."/>
            <person name="Conn L."/>
            <person name="Conway A.B."/>
            <person name="Conway A.R."/>
            <person name="Creasy T.H."/>
            <person name="Dewar K."/>
            <person name="Dunn P."/>
            <person name="Etgu P."/>
            <person name="Feldblyum T.V."/>
            <person name="Feng J.-D."/>
            <person name="Fong B."/>
            <person name="Fujii C.Y."/>
            <person name="Gill J.E."/>
            <person name="Goldsmith A.D."/>
            <person name="Haas B."/>
            <person name="Hansen N.F."/>
            <person name="Hughes B."/>
            <person name="Huizar L."/>
            <person name="Hunter J.L."/>
            <person name="Jenkins J."/>
            <person name="Johnson-Hopson C."/>
            <person name="Khan S."/>
            <person name="Khaykin E."/>
            <person name="Kim C.J."/>
            <person name="Koo H.L."/>
            <person name="Kremenetskaia I."/>
            <person name="Kurtz D.B."/>
            <person name="Kwan A."/>
            <person name="Lam B."/>
            <person name="Langin-Hooper S."/>
            <person name="Lee A."/>
            <person name="Lee J.M."/>
            <person name="Lenz C.A."/>
            <person name="Li J.H."/>
            <person name="Li Y.-P."/>
            <person name="Lin X."/>
            <person name="Liu S.X."/>
            <person name="Liu Z.A."/>
            <person name="Luros J.S."/>
            <person name="Maiti R."/>
            <person name="Marziali A."/>
            <person name="Militscher J."/>
            <person name="Miranda M."/>
            <person name="Nguyen M."/>
            <person name="Nierman W.C."/>
            <person name="Osborne B.I."/>
            <person name="Pai G."/>
            <person name="Peterson J."/>
            <person name="Pham P.K."/>
            <person name="Rizzo M."/>
            <person name="Rooney T."/>
            <person name="Rowley D."/>
            <person name="Sakano H."/>
            <person name="Salzberg S.L."/>
            <person name="Schwartz J.R."/>
            <person name="Shinn P."/>
            <person name="Southwick A.M."/>
            <person name="Sun H."/>
            <person name="Tallon L.J."/>
            <person name="Tambunga G."/>
            <person name="Toriumi M.J."/>
            <person name="Town C.D."/>
            <person name="Utterback T."/>
            <person name="Van Aken S."/>
            <person name="Vaysberg M."/>
            <person name="Vysotskaia V.S."/>
            <person name="Walker M."/>
            <person name="Wu D."/>
            <person name="Yu G."/>
            <person name="Fraser C.M."/>
            <person name="Venter J.C."/>
            <person name="Davis R.W."/>
        </authorList>
    </citation>
    <scope>NUCLEOTIDE SEQUENCE [LARGE SCALE GENOMIC DNA]</scope>
    <source>
        <strain>cv. Columbia</strain>
    </source>
</reference>
<reference key="3">
    <citation type="journal article" date="2017" name="Plant J.">
        <title>Araport11: a complete reannotation of the Arabidopsis thaliana reference genome.</title>
        <authorList>
            <person name="Cheng C.Y."/>
            <person name="Krishnakumar V."/>
            <person name="Chan A.P."/>
            <person name="Thibaud-Nissen F."/>
            <person name="Schobel S."/>
            <person name="Town C.D."/>
        </authorList>
    </citation>
    <scope>GENOME REANNOTATION</scope>
    <source>
        <strain>cv. Columbia</strain>
    </source>
</reference>
<reference key="4">
    <citation type="submission" date="2006-08" db="EMBL/GenBank/DDBJ databases">
        <title>Arabidopsis ORF clones.</title>
        <authorList>
            <person name="Quinitio C."/>
            <person name="Chen H."/>
            <person name="Kim C.J."/>
            <person name="Shinn P."/>
            <person name="Ecker J.R."/>
        </authorList>
    </citation>
    <scope>NUCLEOTIDE SEQUENCE [LARGE SCALE MRNA]</scope>
    <source>
        <strain>cv. Columbia</strain>
    </source>
</reference>
<reference key="5">
    <citation type="journal article" date="2008" name="Plant Physiol.">
        <title>Sequence variation of microRNAs and their binding sites in Arabidopsis.</title>
        <authorList>
            <person name="Ehrenreich I.M."/>
            <person name="Purugganan M.D."/>
        </authorList>
    </citation>
    <scope>NUCLEOTIDE SEQUENCE [GENOMIC DNA] OF 10-277</scope>
    <source>
        <strain>cv. Ag-0</strain>
        <strain>cv. An-1</strain>
        <strain>cv. Bay-0</strain>
        <strain>cv. Br-0</strain>
        <strain>cv. C24</strain>
        <strain>cv. Ct-0</strain>
        <strain>cv. Cvi-0</strain>
        <strain>cv. Edi-0</strain>
        <strain>cv. Ei-2</strain>
        <strain>cv. Ga-0</strain>
        <strain>cv. Gy-0</strain>
        <strain>cv. Kas-2</strain>
        <strain>cv. Ll-0</strain>
        <strain>cv. Mrk-0</strain>
        <strain>cv. Ms-0</strain>
        <strain>cv. Mt-0</strain>
        <strain>cv. Nd-1</strain>
        <strain>cv. Nok-3</strain>
        <strain>cv. Oy-0</strain>
        <strain>cv. Sorbo</strain>
        <strain>cv. Wa-1</strain>
        <strain>cv. Wassilewskija</strain>
        <strain>cv. Wei-0</strain>
        <strain>cv. Wt-5</strain>
    </source>
</reference>
<reference key="6">
    <citation type="journal article" date="2004" name="Plant Mol. Biol.">
        <title>Genome-wide analysis of the GRAS gene family in rice and Arabidopsis.</title>
        <authorList>
            <person name="Tian C."/>
            <person name="Wan P."/>
            <person name="Sun S."/>
            <person name="Li J."/>
            <person name="Chen M."/>
        </authorList>
    </citation>
    <scope>GENE FAMILY</scope>
</reference>
<reference key="7">
    <citation type="journal article" date="2008" name="Plant Mol. Biol.">
        <title>Large-scale analysis of the GRAS gene family in Arabidopsis thaliana.</title>
        <authorList>
            <person name="Lee M.-H."/>
            <person name="Kim B."/>
            <person name="Song S.-K."/>
            <person name="Heo J.-O."/>
            <person name="Yu N.-I."/>
            <person name="Lee S.A."/>
            <person name="Kim M."/>
            <person name="Kim D.G."/>
            <person name="Sohn S.O."/>
            <person name="Lim C.E."/>
            <person name="Chang K.S."/>
            <person name="Lee M.M."/>
            <person name="Lim J."/>
        </authorList>
    </citation>
    <scope>GENE FAMILY</scope>
    <scope>TISSUE SPECIFICITY</scope>
</reference>
<protein>
    <recommendedName>
        <fullName>Scarecrow-like protein 18</fullName>
        <shortName>AtSCL18</shortName>
    </recommendedName>
    <alternativeName>
        <fullName>GRAS family protein 7</fullName>
        <shortName>AtGRAS-7</shortName>
    </alternativeName>
    <alternativeName>
        <fullName>Protein LATERAL SUPPRESSOR</fullName>
    </alternativeName>
</protein>
<evidence type="ECO:0000255" key="1">
    <source>
        <dbReference type="PROSITE-ProRule" id="PRU01191"/>
    </source>
</evidence>
<evidence type="ECO:0000256" key="2">
    <source>
        <dbReference type="SAM" id="MobiDB-lite"/>
    </source>
</evidence>
<evidence type="ECO:0000269" key="3">
    <source>
    </source>
</evidence>
<evidence type="ECO:0000269" key="4">
    <source>
    </source>
</evidence>
<evidence type="ECO:0000305" key="5"/>
<dbReference type="EMBL" id="AY196482">
    <property type="protein sequence ID" value="AAP20048.1"/>
    <property type="molecule type" value="mRNA"/>
</dbReference>
<dbReference type="EMBL" id="AC002328">
    <property type="protein sequence ID" value="AAF79493.1"/>
    <property type="molecule type" value="Genomic_DNA"/>
</dbReference>
<dbReference type="EMBL" id="CP002684">
    <property type="protein sequence ID" value="AEE33268.1"/>
    <property type="molecule type" value="Genomic_DNA"/>
</dbReference>
<dbReference type="EMBL" id="BT026519">
    <property type="protein sequence ID" value="ABH04626.1"/>
    <property type="molecule type" value="mRNA"/>
</dbReference>
<dbReference type="EMBL" id="EF598379">
    <property type="protein sequence ID" value="ABR08911.1"/>
    <property type="molecule type" value="Genomic_DNA"/>
</dbReference>
<dbReference type="EMBL" id="EF598380">
    <property type="protein sequence ID" value="ABR08912.1"/>
    <property type="molecule type" value="Genomic_DNA"/>
</dbReference>
<dbReference type="EMBL" id="EF598381">
    <property type="protein sequence ID" value="ABR08913.1"/>
    <property type="molecule type" value="Genomic_DNA"/>
</dbReference>
<dbReference type="EMBL" id="EF598382">
    <property type="protein sequence ID" value="ABR08914.1"/>
    <property type="molecule type" value="Genomic_DNA"/>
</dbReference>
<dbReference type="EMBL" id="EF598383">
    <property type="protein sequence ID" value="ABR08915.1"/>
    <property type="molecule type" value="Genomic_DNA"/>
</dbReference>
<dbReference type="EMBL" id="EF598384">
    <property type="protein sequence ID" value="ABR08916.1"/>
    <property type="molecule type" value="Genomic_DNA"/>
</dbReference>
<dbReference type="EMBL" id="EF598385">
    <property type="protein sequence ID" value="ABR08917.1"/>
    <property type="molecule type" value="Genomic_DNA"/>
</dbReference>
<dbReference type="EMBL" id="EF598386">
    <property type="protein sequence ID" value="ABR08918.1"/>
    <property type="molecule type" value="Genomic_DNA"/>
</dbReference>
<dbReference type="EMBL" id="EF598387">
    <property type="protein sequence ID" value="ABR08919.1"/>
    <property type="molecule type" value="Genomic_DNA"/>
</dbReference>
<dbReference type="EMBL" id="EF598388">
    <property type="protein sequence ID" value="ABR08920.1"/>
    <property type="molecule type" value="Genomic_DNA"/>
</dbReference>
<dbReference type="EMBL" id="EF598389">
    <property type="protein sequence ID" value="ABR08921.1"/>
    <property type="molecule type" value="Genomic_DNA"/>
</dbReference>
<dbReference type="EMBL" id="EF598390">
    <property type="protein sequence ID" value="ABR08922.1"/>
    <property type="molecule type" value="Genomic_DNA"/>
</dbReference>
<dbReference type="EMBL" id="EF598391">
    <property type="protein sequence ID" value="ABR08923.1"/>
    <property type="molecule type" value="Genomic_DNA"/>
</dbReference>
<dbReference type="EMBL" id="EF598392">
    <property type="protein sequence ID" value="ABR08924.1"/>
    <property type="molecule type" value="Genomic_DNA"/>
</dbReference>
<dbReference type="EMBL" id="EF598393">
    <property type="protein sequence ID" value="ABR08925.1"/>
    <property type="molecule type" value="Genomic_DNA"/>
</dbReference>
<dbReference type="EMBL" id="EF598394">
    <property type="protein sequence ID" value="ABR08926.1"/>
    <property type="molecule type" value="Genomic_DNA"/>
</dbReference>
<dbReference type="EMBL" id="EF598395">
    <property type="protein sequence ID" value="ABR08927.1"/>
    <property type="molecule type" value="Genomic_DNA"/>
</dbReference>
<dbReference type="EMBL" id="EF598396">
    <property type="protein sequence ID" value="ABR08928.1"/>
    <property type="molecule type" value="Genomic_DNA"/>
</dbReference>
<dbReference type="EMBL" id="EF598397">
    <property type="protein sequence ID" value="ABR08929.1"/>
    <property type="molecule type" value="Genomic_DNA"/>
</dbReference>
<dbReference type="EMBL" id="EF598398">
    <property type="protein sequence ID" value="ABR08930.1"/>
    <property type="molecule type" value="Genomic_DNA"/>
</dbReference>
<dbReference type="EMBL" id="EF598399">
    <property type="protein sequence ID" value="ABR08931.1"/>
    <property type="molecule type" value="Genomic_DNA"/>
</dbReference>
<dbReference type="EMBL" id="EF598400">
    <property type="protein sequence ID" value="ABR08932.1"/>
    <property type="molecule type" value="Genomic_DNA"/>
</dbReference>
<dbReference type="EMBL" id="EF598401">
    <property type="protein sequence ID" value="ABR08933.1"/>
    <property type="molecule type" value="Genomic_DNA"/>
</dbReference>
<dbReference type="EMBL" id="EF598402">
    <property type="protein sequence ID" value="ABR08934.1"/>
    <property type="molecule type" value="Genomic_DNA"/>
</dbReference>
<dbReference type="RefSeq" id="NP_175954.1">
    <property type="nucleotide sequence ID" value="NM_104434.4"/>
</dbReference>
<dbReference type="SMR" id="Q9ZWC5"/>
<dbReference type="FunCoup" id="Q9ZWC5">
    <property type="interactions" value="692"/>
</dbReference>
<dbReference type="STRING" id="3702.Q9ZWC5"/>
<dbReference type="PaxDb" id="3702-AT1G55580.1"/>
<dbReference type="ProteomicsDB" id="232802"/>
<dbReference type="EnsemblPlants" id="AT1G55580.1">
    <property type="protein sequence ID" value="AT1G55580.1"/>
    <property type="gene ID" value="AT1G55580"/>
</dbReference>
<dbReference type="GeneID" id="842007"/>
<dbReference type="Gramene" id="AT1G55580.1">
    <property type="protein sequence ID" value="AT1G55580.1"/>
    <property type="gene ID" value="AT1G55580"/>
</dbReference>
<dbReference type="KEGG" id="ath:AT1G55580"/>
<dbReference type="Araport" id="AT1G55580"/>
<dbReference type="TAIR" id="AT1G55580">
    <property type="gene designation" value="LAS"/>
</dbReference>
<dbReference type="eggNOG" id="ENOG502QTC4">
    <property type="taxonomic scope" value="Eukaryota"/>
</dbReference>
<dbReference type="HOGENOM" id="CLU_011924_0_2_1"/>
<dbReference type="InParanoid" id="Q9ZWC5"/>
<dbReference type="OMA" id="GWQNRAL"/>
<dbReference type="OrthoDB" id="1882904at2759"/>
<dbReference type="PhylomeDB" id="Q9ZWC5"/>
<dbReference type="PRO" id="PR:Q9ZWC5"/>
<dbReference type="Proteomes" id="UP000006548">
    <property type="component" value="Chromosome 1"/>
</dbReference>
<dbReference type="ExpressionAtlas" id="Q9ZWC5">
    <property type="expression patterns" value="baseline and differential"/>
</dbReference>
<dbReference type="GO" id="GO:0005634">
    <property type="term" value="C:nucleus"/>
    <property type="evidence" value="ECO:0007669"/>
    <property type="project" value="UniProtKB-SubCell"/>
</dbReference>
<dbReference type="GO" id="GO:0003700">
    <property type="term" value="F:DNA-binding transcription factor activity"/>
    <property type="evidence" value="ECO:0000250"/>
    <property type="project" value="TAIR"/>
</dbReference>
<dbReference type="GO" id="GO:0090506">
    <property type="term" value="P:axillary shoot meristem initiation"/>
    <property type="evidence" value="ECO:0000316"/>
    <property type="project" value="TAIR"/>
</dbReference>
<dbReference type="GO" id="GO:0006355">
    <property type="term" value="P:regulation of DNA-templated transcription"/>
    <property type="evidence" value="ECO:0000304"/>
    <property type="project" value="TAIR"/>
</dbReference>
<dbReference type="GO" id="GO:0010223">
    <property type="term" value="P:secondary shoot formation"/>
    <property type="evidence" value="ECO:0000315"/>
    <property type="project" value="TAIR"/>
</dbReference>
<dbReference type="InterPro" id="IPR005202">
    <property type="entry name" value="TF_GRAS"/>
</dbReference>
<dbReference type="PANTHER" id="PTHR31636">
    <property type="entry name" value="OSJNBA0084A10.13 PROTEIN-RELATED"/>
    <property type="match status" value="1"/>
</dbReference>
<dbReference type="Pfam" id="PF03514">
    <property type="entry name" value="GRAS"/>
    <property type="match status" value="1"/>
</dbReference>
<dbReference type="PROSITE" id="PS50985">
    <property type="entry name" value="GRAS"/>
    <property type="match status" value="1"/>
</dbReference>
<keyword id="KW-0539">Nucleus</keyword>
<keyword id="KW-1185">Reference proteome</keyword>
<keyword id="KW-0804">Transcription</keyword>
<keyword id="KW-0805">Transcription regulation</keyword>